<feature type="signal peptide" evidence="3">
    <location>
        <begin position="1"/>
        <end position="45"/>
    </location>
</feature>
<feature type="chain" id="PRO_0000019492" description="Neurexin-1-beta">
    <location>
        <begin position="46"/>
        <end position="467"/>
    </location>
</feature>
<feature type="topological domain" description="Extracellular" evidence="4">
    <location>
        <begin position="46"/>
        <end position="391"/>
    </location>
</feature>
<feature type="transmembrane region" description="Helical" evidence="4">
    <location>
        <begin position="392"/>
        <end position="412"/>
    </location>
</feature>
<feature type="topological domain" description="Cytoplasmic" evidence="4">
    <location>
        <begin position="413"/>
        <end position="467"/>
    </location>
</feature>
<feature type="domain" description="Laminin G-like" evidence="5">
    <location>
        <begin position="86"/>
        <end position="284"/>
    </location>
</feature>
<feature type="region of interest" description="Essential for interaction with CBLN1; modulates interaction affinity with NLGN1, NLGN2 and NLGN3; prevents interaction with DAG1/alpha-dystroglycan; modulates interaction with alpha-latrotoxin" evidence="2 3">
    <location>
        <begin position="200"/>
        <end position="229"/>
    </location>
</feature>
<feature type="region of interest" description="Disordered" evidence="6">
    <location>
        <begin position="318"/>
        <end position="380"/>
    </location>
</feature>
<feature type="region of interest" description="Disordered" evidence="6">
    <location>
        <begin position="434"/>
        <end position="467"/>
    </location>
</feature>
<feature type="compositionally biased region" description="Polar residues" evidence="6">
    <location>
        <begin position="324"/>
        <end position="339"/>
    </location>
</feature>
<feature type="binding site" evidence="3">
    <location>
        <position position="136"/>
    </location>
    <ligand>
        <name>Ca(2+)</name>
        <dbReference type="ChEBI" id="CHEBI:29108"/>
    </ligand>
</feature>
<feature type="binding site" evidence="3">
    <location>
        <position position="153"/>
    </location>
    <ligand>
        <name>Ca(2+)</name>
        <dbReference type="ChEBI" id="CHEBI:29108"/>
    </ligand>
</feature>
<feature type="binding site" evidence="3">
    <location>
        <position position="235"/>
    </location>
    <ligand>
        <name>Ca(2+)</name>
        <dbReference type="ChEBI" id="CHEBI:29108"/>
    </ligand>
</feature>
<feature type="binding site" evidence="3">
    <location>
        <position position="237"/>
    </location>
    <ligand>
        <name>Ca(2+)</name>
        <dbReference type="ChEBI" id="CHEBI:29108"/>
    </ligand>
</feature>
<feature type="modified residue" description="Phosphoserine" evidence="2">
    <location>
        <position position="449"/>
    </location>
</feature>
<feature type="modified residue" description="Phosphoserine" evidence="2">
    <location>
        <position position="450"/>
    </location>
</feature>
<feature type="modified residue" description="Phosphoserine" evidence="2">
    <location>
        <position position="453"/>
    </location>
</feature>
<feature type="glycosylation site" description="N-linked (GlcNAc...) asparagine" evidence="4">
    <location>
        <position position="183"/>
    </location>
</feature>
<feature type="glycosylation site" description="O-linked (Xyl...) (heparan sulfate) serine" evidence="1">
    <location>
        <position position="345"/>
    </location>
</feature>
<feature type="splice variant" id="VSP_003494" description="In isoform 3b and isoform 4b." evidence="7">
    <location>
        <begin position="201"/>
        <end position="230"/>
    </location>
</feature>
<feature type="splice variant" id="VSP_003495" description="In isoform 2b and isoform 4b." evidence="7">
    <location>
        <begin position="363"/>
        <end position="365"/>
    </location>
</feature>
<feature type="strand" evidence="9">
    <location>
        <begin position="86"/>
        <end position="98"/>
    </location>
</feature>
<feature type="helix" evidence="9">
    <location>
        <begin position="101"/>
        <end position="103"/>
    </location>
</feature>
<feature type="strand" evidence="9">
    <location>
        <begin position="107"/>
        <end position="118"/>
    </location>
</feature>
<feature type="strand" evidence="9">
    <location>
        <begin position="121"/>
        <end position="131"/>
    </location>
</feature>
<feature type="strand" evidence="9">
    <location>
        <begin position="137"/>
        <end position="143"/>
    </location>
</feature>
<feature type="strand" evidence="9">
    <location>
        <begin position="146"/>
        <end position="155"/>
    </location>
</feature>
<feature type="strand" evidence="9">
    <location>
        <begin position="158"/>
        <end position="161"/>
    </location>
</feature>
<feature type="strand" evidence="9">
    <location>
        <begin position="169"/>
        <end position="171"/>
    </location>
</feature>
<feature type="strand" evidence="9">
    <location>
        <begin position="173"/>
        <end position="180"/>
    </location>
</feature>
<feature type="strand" evidence="9">
    <location>
        <begin position="183"/>
        <end position="188"/>
    </location>
</feature>
<feature type="strand" evidence="9">
    <location>
        <begin position="194"/>
        <end position="196"/>
    </location>
</feature>
<feature type="strand" evidence="9">
    <location>
        <begin position="239"/>
        <end position="245"/>
    </location>
</feature>
<feature type="turn" evidence="9">
    <location>
        <begin position="247"/>
        <end position="250"/>
    </location>
</feature>
<feature type="strand" evidence="9">
    <location>
        <begin position="255"/>
        <end position="262"/>
    </location>
</feature>
<feature type="helix" evidence="9">
    <location>
        <begin position="267"/>
        <end position="272"/>
    </location>
</feature>
<feature type="strand" evidence="9">
    <location>
        <begin position="278"/>
        <end position="286"/>
    </location>
</feature>
<organism>
    <name type="scientific">Bos taurus</name>
    <name type="common">Bovine</name>
    <dbReference type="NCBI Taxonomy" id="9913"/>
    <lineage>
        <taxon>Eukaryota</taxon>
        <taxon>Metazoa</taxon>
        <taxon>Chordata</taxon>
        <taxon>Craniata</taxon>
        <taxon>Vertebrata</taxon>
        <taxon>Euteleostomi</taxon>
        <taxon>Mammalia</taxon>
        <taxon>Eutheria</taxon>
        <taxon>Laurasiatheria</taxon>
        <taxon>Artiodactyla</taxon>
        <taxon>Ruminantia</taxon>
        <taxon>Pecora</taxon>
        <taxon>Bovidae</taxon>
        <taxon>Bovinae</taxon>
        <taxon>Bos</taxon>
    </lineage>
</organism>
<reference key="1">
    <citation type="journal article" date="1994" name="J. Biol. Chem.">
        <title>Conserved domain structure of beta-neurexins. Unusual cleaved signal sequences in receptor-like neuronal cell-surface proteins.</title>
        <authorList>
            <person name="Ushkaryov Y.A."/>
            <person name="Hata Y."/>
            <person name="Ichtchenko K."/>
            <person name="Moomaw C."/>
            <person name="Afendis S."/>
            <person name="Slaughter C.A."/>
            <person name="Suedhof T.C."/>
        </authorList>
    </citation>
    <scope>NUCLEOTIDE SEQUENCE [MRNA] (ISOFORMS 1B; 2B; 3B AND 4B)</scope>
    <source>
        <tissue>Brain</tissue>
    </source>
</reference>
<evidence type="ECO:0000250" key="1">
    <source>
        <dbReference type="UniProtKB" id="P0DI97"/>
    </source>
</evidence>
<evidence type="ECO:0000250" key="2">
    <source>
        <dbReference type="UniProtKB" id="P58400"/>
    </source>
</evidence>
<evidence type="ECO:0000250" key="3">
    <source>
        <dbReference type="UniProtKB" id="Q63373"/>
    </source>
</evidence>
<evidence type="ECO:0000255" key="4"/>
<evidence type="ECO:0000255" key="5">
    <source>
        <dbReference type="PROSITE-ProRule" id="PRU00122"/>
    </source>
</evidence>
<evidence type="ECO:0000256" key="6">
    <source>
        <dbReference type="SAM" id="MobiDB-lite"/>
    </source>
</evidence>
<evidence type="ECO:0000303" key="7">
    <source>
    </source>
</evidence>
<evidence type="ECO:0000305" key="8"/>
<evidence type="ECO:0007829" key="9">
    <source>
        <dbReference type="PDB" id="3VKF"/>
    </source>
</evidence>
<accession>Q28142</accession>
<dbReference type="EMBL" id="L27870">
    <property type="protein sequence ID" value="AAA19906.1"/>
    <property type="molecule type" value="mRNA"/>
</dbReference>
<dbReference type="RefSeq" id="NP_001103275.1">
    <molecule id="Q28142-3"/>
    <property type="nucleotide sequence ID" value="NM_001109805.2"/>
</dbReference>
<dbReference type="PDB" id="3VKF">
    <property type="method" value="X-ray"/>
    <property type="resolution" value="3.30 A"/>
    <property type="chains" value="C/D=83-290"/>
</dbReference>
<dbReference type="PDBsum" id="3VKF"/>
<dbReference type="SMR" id="Q28142"/>
<dbReference type="FunCoup" id="Q28142">
    <property type="interactions" value="38"/>
</dbReference>
<dbReference type="STRING" id="9913.ENSBTAP00000044872"/>
<dbReference type="GlyCosmos" id="Q28142">
    <property type="glycosylation" value="1 site, No reported glycans"/>
</dbReference>
<dbReference type="GlyGen" id="Q28142">
    <property type="glycosylation" value="2 sites"/>
</dbReference>
<dbReference type="PaxDb" id="9913-ENSBTAP00000053932"/>
<dbReference type="GeneID" id="281950"/>
<dbReference type="CTD" id="9378"/>
<dbReference type="InParanoid" id="Q28142"/>
<dbReference type="OrthoDB" id="6275838at2759"/>
<dbReference type="EvolutionaryTrace" id="Q28142"/>
<dbReference type="Proteomes" id="UP000009136">
    <property type="component" value="Unplaced"/>
</dbReference>
<dbReference type="GO" id="GO:0042995">
    <property type="term" value="C:cell projection"/>
    <property type="evidence" value="ECO:0007669"/>
    <property type="project" value="UniProtKB-KW"/>
</dbReference>
<dbReference type="GO" id="GO:0005886">
    <property type="term" value="C:plasma membrane"/>
    <property type="evidence" value="ECO:0000304"/>
    <property type="project" value="Reactome"/>
</dbReference>
<dbReference type="GO" id="GO:0042734">
    <property type="term" value="C:presynaptic membrane"/>
    <property type="evidence" value="ECO:0007669"/>
    <property type="project" value="UniProtKB-SubCell"/>
</dbReference>
<dbReference type="GO" id="GO:0046872">
    <property type="term" value="F:metal ion binding"/>
    <property type="evidence" value="ECO:0007669"/>
    <property type="project" value="UniProtKB-KW"/>
</dbReference>
<dbReference type="GO" id="GO:0001525">
    <property type="term" value="P:angiogenesis"/>
    <property type="evidence" value="ECO:0000250"/>
    <property type="project" value="UniProtKB"/>
</dbReference>
<dbReference type="GO" id="GO:0007155">
    <property type="term" value="P:cell adhesion"/>
    <property type="evidence" value="ECO:0007669"/>
    <property type="project" value="UniProtKB-KW"/>
</dbReference>
<dbReference type="CDD" id="cd00110">
    <property type="entry name" value="LamG"/>
    <property type="match status" value="1"/>
</dbReference>
<dbReference type="FunFam" id="2.60.120.200:FF:000003">
    <property type="entry name" value="neurexin-1 isoform X1"/>
    <property type="match status" value="1"/>
</dbReference>
<dbReference type="Gene3D" id="2.60.120.200">
    <property type="match status" value="1"/>
</dbReference>
<dbReference type="InterPro" id="IPR013320">
    <property type="entry name" value="ConA-like_dom_sf"/>
</dbReference>
<dbReference type="InterPro" id="IPR001791">
    <property type="entry name" value="Laminin_G"/>
</dbReference>
<dbReference type="InterPro" id="IPR003585">
    <property type="entry name" value="Neurexin-like"/>
</dbReference>
<dbReference type="InterPro" id="IPR050372">
    <property type="entry name" value="Neurexin-related_CASP"/>
</dbReference>
<dbReference type="InterPro" id="IPR027789">
    <property type="entry name" value="Syndecan/Neurexin_dom"/>
</dbReference>
<dbReference type="PANTHER" id="PTHR15036:SF51">
    <property type="entry name" value="NEUREXIN-1"/>
    <property type="match status" value="1"/>
</dbReference>
<dbReference type="PANTHER" id="PTHR15036">
    <property type="entry name" value="PIKACHURIN-LIKE PROTEIN"/>
    <property type="match status" value="1"/>
</dbReference>
<dbReference type="Pfam" id="PF02210">
    <property type="entry name" value="Laminin_G_2"/>
    <property type="match status" value="1"/>
</dbReference>
<dbReference type="Pfam" id="PF01034">
    <property type="entry name" value="Syndecan"/>
    <property type="match status" value="1"/>
</dbReference>
<dbReference type="SMART" id="SM00294">
    <property type="entry name" value="4.1m"/>
    <property type="match status" value="1"/>
</dbReference>
<dbReference type="SMART" id="SM00282">
    <property type="entry name" value="LamG"/>
    <property type="match status" value="1"/>
</dbReference>
<dbReference type="SUPFAM" id="SSF49899">
    <property type="entry name" value="Concanavalin A-like lectins/glucanases"/>
    <property type="match status" value="1"/>
</dbReference>
<dbReference type="PROSITE" id="PS50025">
    <property type="entry name" value="LAM_G_DOMAIN"/>
    <property type="match status" value="1"/>
</dbReference>
<sequence>MYQRMLRCGAELGSPGGGGGGAGGRLALLWIVPLTLSGLLGVAWGASSLGAHHIHHFHGSSKHHSVPIAIYRSPASLRGGHAGTTYIFSKGGGQITYKWPPNDRPSTRADRLAIGFSTVQKEAVLVRVDSSSGLGDYLELHIHQGKIGVKFNVGTDDIAIEESNAIINDGKYHVVRFTRSGGNATLQVDSWPVIERYPAGNNDNERLAIARQRIPYRLGRVVDEWLLDKGRQLTIFNSQATIIIGGKEQGQPFQGQLSGLYYNGLKVLNMAAENDANIAIVGNVRLVGEVPSSMTTESTATAMQSEMSTSIMETTTTLATSTARRGNSPTKEPVSQTTDDILVASAECPSDDEDIDPCEPSSGGLANPTRAGGREPYPGSAEVIRESSSTTGMVVGIVAAAALCILILLYAMYKYRNRDEGSYHVDESRNYISNSAQSNGAVVKEKQPSSAKSANKNKKNKDKEYYV</sequence>
<comment type="function">
    <text evidence="1 3">Neuronal cell surface protein involved in cell recognition and cell adhesion by forming intracellular junctions through binding to neuroligins (By similarity). Plays a role in formation of synaptic junctions (By similarity). Functions as part of a trans-synaptic complex by binding to cerebellins and postsynaptic GRID1. This interaction helps regulate the activity of NMDA and AMPA receptors at hippocampal synapses without affecting synapse formation. NRXN1B-CBLN2-GRID1 complex transduce presynaptic signals into postsynaptic NMDAR response (By similarity).</text>
</comment>
<comment type="subunit">
    <text evidence="1 3">The cytoplasmic C-terminal region binds to CASK. Binds NLGN1, NLGN2 and NLGN3, DAG1 (alpha-dystroglycan) and alpha-latrotoxin. Binding to neuroligins is calcium-dependent, and the binding preference ranks as follow: NLGN1 &gt; NLGN4 &gt;&gt; NLGN3 &gt; NLGN2 (By similarity). Interacts with CBLN2 and more weakly with CBLN4 (By similarity). Interacts with CBLN1; interaction is CBLN1 hexamer form-dependent; CBLN1-binding is calcium-independent; isoform 1b does not interact with CBLN1. Interacts with CLSTN3 (By similarity).</text>
</comment>
<comment type="subcellular location">
    <subcellularLocation>
        <location evidence="1">Presynaptic cell membrane</location>
        <topology evidence="4">Single-pass type I membrane protein</topology>
    </subcellularLocation>
</comment>
<comment type="alternative products">
    <event type="alternative promoter"/>
    <event type="alternative splicing"/>
    <isoform>
        <id>Q28142-1</id>
        <name>1b</name>
        <name>Beta-4A5A</name>
        <sequence type="displayed"/>
    </isoform>
    <isoform>
        <id>Q28142-2</id>
        <name>2b</name>
        <name>Beta-4A5B</name>
        <sequence type="described" ref="VSP_003495"/>
    </isoform>
    <isoform>
        <id>Q28142-3</id>
        <name>3b</name>
        <name>Beta-4B5A</name>
        <sequence type="described" ref="VSP_003494"/>
    </isoform>
    <isoform>
        <id>Q28142-4</id>
        <name>4b</name>
        <name>Beta-4B5B</name>
        <sequence type="described" ref="VSP_003494 VSP_003495"/>
    </isoform>
    <isoform>
        <id>Q28146-1</id>
        <name>1a</name>
        <name>Alpha-1A2A3A4A5A</name>
        <sequence type="external"/>
    </isoform>
    <isoform>
        <id>Q28146-2</id>
        <name>2a</name>
        <name>Alpha-1B</name>
        <sequence type="external"/>
    </isoform>
    <isoform>
        <id>Q28146-3</id>
        <name>3a</name>
        <name>Alpha-1C</name>
        <sequence type="external"/>
    </isoform>
    <isoform>
        <id>Q28146-4</id>
        <name>4a</name>
        <name>Alpha-1D</name>
        <sequence type="external"/>
    </isoform>
    <isoform>
        <id>Q28146-5</id>
        <name>5a</name>
        <name>Alpha-1E</name>
        <sequence type="external"/>
    </isoform>
    <isoform>
        <id>Q28146-6</id>
        <name>6a</name>
        <name>Alpha-1F</name>
        <sequence type="external"/>
    </isoform>
    <isoform>
        <id>Q28146-7</id>
        <name>7a</name>
        <name>Alpha-1G</name>
        <sequence type="external"/>
    </isoform>
    <isoform>
        <id>Q28146-8</id>
        <name>8a</name>
        <name>Alpha-2B</name>
        <sequence type="external"/>
    </isoform>
    <isoform>
        <id>Q28146-9</id>
        <name>9a</name>
        <name>Alpha-2C</name>
        <sequence type="external"/>
    </isoform>
    <isoform>
        <id>Q28146-10</id>
        <name>10a</name>
        <name>Alpha-3B</name>
        <sequence type="external"/>
    </isoform>
    <isoform>
        <id>Q28146-11</id>
        <name>11a</name>
        <name>Alpha-4B</name>
        <sequence type="external"/>
    </isoform>
    <isoform>
        <id>Q28146-12</id>
        <name>12a</name>
        <name>Alpha-5B</name>
        <sequence type="external"/>
    </isoform>
    <text>A number of isoforms alpha-type and beta-type are produced by alternative promoter usage. Beta-type isoforms differ from alpha-type isoforms in their N-terminus. In addition, there are at least five alternatively spliced sites, each of which may be spliced in up to seven different ways. Combinatorial splicing at each of these sites may lead to the generation of at least 96 isoforms. Experimental confirmation may be lacking for some isoforms.</text>
</comment>
<comment type="PTM">
    <text evidence="1">O-glycosylated; contains heparan sulfate. Heparan sulfate attachment is required for synapse development by mediating interactions with neuroligins.</text>
</comment>
<comment type="similarity">
    <text evidence="8">Belongs to the neurexin family.</text>
</comment>
<keyword id="KW-0002">3D-structure</keyword>
<keyword id="KW-0877">Alternative promoter usage</keyword>
<keyword id="KW-0025">Alternative splicing</keyword>
<keyword id="KW-0037">Angiogenesis</keyword>
<keyword id="KW-0106">Calcium</keyword>
<keyword id="KW-0130">Cell adhesion</keyword>
<keyword id="KW-1003">Cell membrane</keyword>
<keyword id="KW-0966">Cell projection</keyword>
<keyword id="KW-0325">Glycoprotein</keyword>
<keyword id="KW-0357">Heparan sulfate</keyword>
<keyword id="KW-0472">Membrane</keyword>
<keyword id="KW-0479">Metal-binding</keyword>
<keyword id="KW-0597">Phosphoprotein</keyword>
<keyword id="KW-0654">Proteoglycan</keyword>
<keyword id="KW-1185">Reference proteome</keyword>
<keyword id="KW-0677">Repeat</keyword>
<keyword id="KW-0732">Signal</keyword>
<keyword id="KW-0770">Synapse</keyword>
<keyword id="KW-0812">Transmembrane</keyword>
<keyword id="KW-1133">Transmembrane helix</keyword>
<gene>
    <name evidence="2" type="primary">NRXN1</name>
</gene>
<name>NRX1B_BOVIN</name>
<protein>
    <recommendedName>
        <fullName evidence="2">Neurexin-1-beta</fullName>
    </recommendedName>
    <alternativeName>
        <fullName>Neurexin I-beta</fullName>
    </alternativeName>
</protein>
<proteinExistence type="evidence at protein level"/>